<feature type="chain" id="PRO_0000243228" description="Large ribosomal subunit protein uL22">
    <location>
        <begin position="1"/>
        <end position="113"/>
    </location>
</feature>
<dbReference type="EMBL" id="CP000050">
    <property type="protein sequence ID" value="AAY50379.1"/>
    <property type="molecule type" value="Genomic_DNA"/>
</dbReference>
<dbReference type="SMR" id="Q4URE4"/>
<dbReference type="KEGG" id="xcb:XC_3335"/>
<dbReference type="HOGENOM" id="CLU_083987_3_3_6"/>
<dbReference type="Proteomes" id="UP000000420">
    <property type="component" value="Chromosome"/>
</dbReference>
<dbReference type="GO" id="GO:0022625">
    <property type="term" value="C:cytosolic large ribosomal subunit"/>
    <property type="evidence" value="ECO:0007669"/>
    <property type="project" value="TreeGrafter"/>
</dbReference>
<dbReference type="GO" id="GO:0019843">
    <property type="term" value="F:rRNA binding"/>
    <property type="evidence" value="ECO:0007669"/>
    <property type="project" value="UniProtKB-UniRule"/>
</dbReference>
<dbReference type="GO" id="GO:0003735">
    <property type="term" value="F:structural constituent of ribosome"/>
    <property type="evidence" value="ECO:0007669"/>
    <property type="project" value="InterPro"/>
</dbReference>
<dbReference type="GO" id="GO:0006412">
    <property type="term" value="P:translation"/>
    <property type="evidence" value="ECO:0007669"/>
    <property type="project" value="UniProtKB-UniRule"/>
</dbReference>
<dbReference type="CDD" id="cd00336">
    <property type="entry name" value="Ribosomal_L22"/>
    <property type="match status" value="1"/>
</dbReference>
<dbReference type="FunFam" id="3.90.470.10:FF:000001">
    <property type="entry name" value="50S ribosomal protein L22"/>
    <property type="match status" value="1"/>
</dbReference>
<dbReference type="Gene3D" id="3.90.470.10">
    <property type="entry name" value="Ribosomal protein L22/L17"/>
    <property type="match status" value="1"/>
</dbReference>
<dbReference type="HAMAP" id="MF_01331_B">
    <property type="entry name" value="Ribosomal_uL22_B"/>
    <property type="match status" value="1"/>
</dbReference>
<dbReference type="InterPro" id="IPR001063">
    <property type="entry name" value="Ribosomal_uL22"/>
</dbReference>
<dbReference type="InterPro" id="IPR005727">
    <property type="entry name" value="Ribosomal_uL22_bac/chlpt-type"/>
</dbReference>
<dbReference type="InterPro" id="IPR047867">
    <property type="entry name" value="Ribosomal_uL22_bac/org-type"/>
</dbReference>
<dbReference type="InterPro" id="IPR018260">
    <property type="entry name" value="Ribosomal_uL22_CS"/>
</dbReference>
<dbReference type="InterPro" id="IPR036394">
    <property type="entry name" value="Ribosomal_uL22_sf"/>
</dbReference>
<dbReference type="NCBIfam" id="TIGR01044">
    <property type="entry name" value="rplV_bact"/>
    <property type="match status" value="1"/>
</dbReference>
<dbReference type="PANTHER" id="PTHR13501">
    <property type="entry name" value="CHLOROPLAST 50S RIBOSOMAL PROTEIN L22-RELATED"/>
    <property type="match status" value="1"/>
</dbReference>
<dbReference type="PANTHER" id="PTHR13501:SF8">
    <property type="entry name" value="LARGE RIBOSOMAL SUBUNIT PROTEIN UL22M"/>
    <property type="match status" value="1"/>
</dbReference>
<dbReference type="Pfam" id="PF00237">
    <property type="entry name" value="Ribosomal_L22"/>
    <property type="match status" value="1"/>
</dbReference>
<dbReference type="SUPFAM" id="SSF54843">
    <property type="entry name" value="Ribosomal protein L22"/>
    <property type="match status" value="1"/>
</dbReference>
<dbReference type="PROSITE" id="PS00464">
    <property type="entry name" value="RIBOSOMAL_L22"/>
    <property type="match status" value="1"/>
</dbReference>
<keyword id="KW-0687">Ribonucleoprotein</keyword>
<keyword id="KW-0689">Ribosomal protein</keyword>
<keyword id="KW-0694">RNA-binding</keyword>
<keyword id="KW-0699">rRNA-binding</keyword>
<name>RL22_XANC8</name>
<protein>
    <recommendedName>
        <fullName evidence="1">Large ribosomal subunit protein uL22</fullName>
    </recommendedName>
    <alternativeName>
        <fullName evidence="2">50S ribosomal protein L22</fullName>
    </alternativeName>
</protein>
<comment type="function">
    <text evidence="1">This protein binds specifically to 23S rRNA; its binding is stimulated by other ribosomal proteins, e.g. L4, L17, and L20. It is important during the early stages of 50S assembly. It makes multiple contacts with different domains of the 23S rRNA in the assembled 50S subunit and ribosome (By similarity).</text>
</comment>
<comment type="function">
    <text evidence="1">The globular domain of the protein is located near the polypeptide exit tunnel on the outside of the subunit, while an extended beta-hairpin is found that lines the wall of the exit tunnel in the center of the 70S ribosome.</text>
</comment>
<comment type="subunit">
    <text evidence="1">Part of the 50S ribosomal subunit.</text>
</comment>
<comment type="similarity">
    <text evidence="1">Belongs to the universal ribosomal protein uL22 family.</text>
</comment>
<sequence length="113" mass="12305">MTMEAKAILRTARISPQKARLVADQVRGLSAERAVNLLKFSDKKAAHLIKKVVESAIANAENNQGADVDELKVKTIMVDEGPSLKRFMARAKGRGTRILKRTSHITVVVGAAK</sequence>
<evidence type="ECO:0000255" key="1">
    <source>
        <dbReference type="HAMAP-Rule" id="MF_01331"/>
    </source>
</evidence>
<evidence type="ECO:0000305" key="2"/>
<accession>Q4URE4</accession>
<organism>
    <name type="scientific">Xanthomonas campestris pv. campestris (strain 8004)</name>
    <dbReference type="NCBI Taxonomy" id="314565"/>
    <lineage>
        <taxon>Bacteria</taxon>
        <taxon>Pseudomonadati</taxon>
        <taxon>Pseudomonadota</taxon>
        <taxon>Gammaproteobacteria</taxon>
        <taxon>Lysobacterales</taxon>
        <taxon>Lysobacteraceae</taxon>
        <taxon>Xanthomonas</taxon>
    </lineage>
</organism>
<gene>
    <name evidence="1" type="primary">rplV</name>
    <name type="ordered locus">XC_3335</name>
</gene>
<reference key="1">
    <citation type="journal article" date="2005" name="Genome Res.">
        <title>Comparative and functional genomic analyses of the pathogenicity of phytopathogen Xanthomonas campestris pv. campestris.</title>
        <authorList>
            <person name="Qian W."/>
            <person name="Jia Y."/>
            <person name="Ren S.-X."/>
            <person name="He Y.-Q."/>
            <person name="Feng J.-X."/>
            <person name="Lu L.-F."/>
            <person name="Sun Q."/>
            <person name="Ying G."/>
            <person name="Tang D.-J."/>
            <person name="Tang H."/>
            <person name="Wu W."/>
            <person name="Hao P."/>
            <person name="Wang L."/>
            <person name="Jiang B.-L."/>
            <person name="Zeng S."/>
            <person name="Gu W.-Y."/>
            <person name="Lu G."/>
            <person name="Rong L."/>
            <person name="Tian Y."/>
            <person name="Yao Z."/>
            <person name="Fu G."/>
            <person name="Chen B."/>
            <person name="Fang R."/>
            <person name="Qiang B."/>
            <person name="Chen Z."/>
            <person name="Zhao G.-P."/>
            <person name="Tang J.-L."/>
            <person name="He C."/>
        </authorList>
    </citation>
    <scope>NUCLEOTIDE SEQUENCE [LARGE SCALE GENOMIC DNA]</scope>
    <source>
        <strain>8004</strain>
    </source>
</reference>
<proteinExistence type="inferred from homology"/>